<evidence type="ECO:0000250" key="1"/>
<evidence type="ECO:0000255" key="2"/>
<evidence type="ECO:0000305" key="3"/>
<name>CYF_WHEAT</name>
<geneLocation type="chloroplast"/>
<proteinExistence type="inferred from homology"/>
<reference key="1">
    <citation type="journal article" date="1984" name="Mol. Gen. Genet.">
        <title>Location and nucleotide sequence of the gene for cytochrome f in wheat chloroplast DNA.</title>
        <authorList>
            <person name="Willey D.L."/>
            <person name="Howe C.J."/>
            <person name="Auffret A.D."/>
            <person name="Bowman C.M."/>
            <person name="Dyer T.A."/>
            <person name="Gray J.C."/>
        </authorList>
    </citation>
    <scope>NUCLEOTIDE SEQUENCE [GENOMIC DNA]</scope>
</reference>
<reference key="2">
    <citation type="journal article" date="2000" name="Plant Mol. Biol. Rep.">
        <title>Chinese spring wheat (Triticum aestivum L.) chloroplast genome: complete sequence and contig clones.</title>
        <authorList>
            <person name="Ogihara Y."/>
            <person name="Isono K."/>
            <person name="Kojima T."/>
            <person name="Endo A."/>
            <person name="Hanaoka M."/>
            <person name="Shiina T."/>
            <person name="Terachi T."/>
            <person name="Utsugi S."/>
            <person name="Murata M."/>
            <person name="Mori N."/>
            <person name="Takumi S."/>
            <person name="Ikeo K."/>
            <person name="Gojobori T."/>
            <person name="Murai R."/>
            <person name="Murai K."/>
            <person name="Matsuoka Y."/>
            <person name="Ohnishi Y."/>
            <person name="Tajiri H."/>
            <person name="Tsunewaki K."/>
        </authorList>
    </citation>
    <scope>NUCLEOTIDE SEQUENCE [LARGE SCALE GENOMIC DNA]</scope>
    <source>
        <strain>cv. Chinese Spring</strain>
    </source>
</reference>
<sequence length="320" mass="35363">MENRNTFSWVKEQITRSISVSIMIYVITRTSISNAYPIFAQQGYENPREATGRIVCANCHLASKPVDIEVPQAVLPDTVFEAVLRIPYDMQLKQVLANGKKGGLNVGAVLILPEGFELAPPDRISPELKEKIGNLAFQSYRPDKKNILVIGPVPGKKYSEIVFPILSPDPATKKDAHFLKYPIYVGGNRGRGQIYPDGSKSNNTVYNATSTGIVRKILRKEKGGYEISIVDASDGRQVIDIIPPGPELLVSEGESIKLDQPLTSNPNVGGFGQGDAEIVLQDPLRVQGLLFFFASVILAQVFLVLKKKQFEKVQLYEMNF</sequence>
<protein>
    <recommendedName>
        <fullName>Cytochrome f</fullName>
    </recommendedName>
</protein>
<dbReference type="EMBL" id="X00538">
    <property type="protein sequence ID" value="CAA25213.1"/>
    <property type="molecule type" value="Genomic_DNA"/>
</dbReference>
<dbReference type="EMBL" id="AB042240">
    <property type="protein sequence ID" value="BAB47046.1"/>
    <property type="molecule type" value="Genomic_DNA"/>
</dbReference>
<dbReference type="PIR" id="S07296">
    <property type="entry name" value="S07296"/>
</dbReference>
<dbReference type="RefSeq" id="NP_114271.1">
    <property type="nucleotide sequence ID" value="NC_002762.1"/>
</dbReference>
<dbReference type="SMR" id="P05151"/>
<dbReference type="STRING" id="4565.P05151"/>
<dbReference type="PaxDb" id="4565-EPlTAEP00000010051"/>
<dbReference type="EnsemblPlants" id="TraesJUL2D03G01105930.1">
    <property type="protein sequence ID" value="TraesJUL2D03G01105930.1.CDS1"/>
    <property type="gene ID" value="TraesJUL2D03G01105930"/>
</dbReference>
<dbReference type="EnsemblPlants" id="TraesKAR6B01G0219450.1">
    <property type="protein sequence ID" value="cds.TraesKAR6B01G0219450.1"/>
    <property type="gene ID" value="TraesKAR6B01G0219450"/>
</dbReference>
<dbReference type="EnsemblPlants" id="TraesKARUn01G0026030.1">
    <property type="protein sequence ID" value="cds.TraesKARUn01G0026030.1"/>
    <property type="gene ID" value="TraesKARUn01G0026030"/>
</dbReference>
<dbReference type="EnsemblPlants" id="TraesKARUn01G0026330.1">
    <property type="protein sequence ID" value="cds.TraesKARUn01G0026330.1"/>
    <property type="gene ID" value="TraesKARUn01G0026330"/>
</dbReference>
<dbReference type="EnsemblPlants" id="TraesKARUn01G0028490.1">
    <property type="protein sequence ID" value="cds.TraesKARUn01G0028490.1"/>
    <property type="gene ID" value="TraesKARUn01G0028490"/>
</dbReference>
<dbReference type="EnsemblPlants" id="TraesKARUn01G0029110.1">
    <property type="protein sequence ID" value="cds.TraesKARUn01G0029110.1"/>
    <property type="gene ID" value="TraesKARUn01G0029110"/>
</dbReference>
<dbReference type="EnsemblPlants" id="TraesKARUn01G0031700.1">
    <property type="protein sequence ID" value="cds.TraesKARUn01G0031700.1"/>
    <property type="gene ID" value="TraesKARUn01G0031700"/>
</dbReference>
<dbReference type="EnsemblPlants" id="TraesKARUn01G0032650.1">
    <property type="protein sequence ID" value="cds.TraesKARUn01G0032650.1"/>
    <property type="gene ID" value="TraesKARUn01G0032650"/>
</dbReference>
<dbReference type="EnsemblPlants" id="TraesKARUn01G0033800.1">
    <property type="protein sequence ID" value="cds.TraesKARUn01G0033800.1"/>
    <property type="gene ID" value="TraesKARUn01G0033800"/>
</dbReference>
<dbReference type="EnsemblPlants" id="TraesKARUn01G0034660.1">
    <property type="protein sequence ID" value="cds.TraesKARUn01G0034660.1"/>
    <property type="gene ID" value="TraesKARUn01G0034660"/>
</dbReference>
<dbReference type="EnsemblPlants" id="TraesKARUn01G0035880.1">
    <property type="protein sequence ID" value="cds.TraesKARUn01G0035880.1"/>
    <property type="gene ID" value="TraesKARUn01G0035880"/>
</dbReference>
<dbReference type="EnsemblPlants" id="TraesKARUn01G0071130.1">
    <property type="protein sequence ID" value="cds.TraesKARUn01G0071130.1"/>
    <property type="gene ID" value="TraesKARUn01G0071130"/>
</dbReference>
<dbReference type="EnsemblPlants" id="TraesKARUn01G0074950.1">
    <property type="protein sequence ID" value="cds.TraesKARUn01G0074950.1"/>
    <property type="gene ID" value="TraesKARUn01G0074950"/>
</dbReference>
<dbReference type="EnsemblPlants" id="TraesKARUn01G0075260.1">
    <property type="protein sequence ID" value="cds.TraesKARUn01G0075260.1"/>
    <property type="gene ID" value="TraesKARUn01G0075260"/>
</dbReference>
<dbReference type="EnsemblPlants" id="TraesKARUn01G0075390.1">
    <property type="protein sequence ID" value="cds.TraesKARUn01G0075390.1"/>
    <property type="gene ID" value="TraesKARUn01G0075390"/>
</dbReference>
<dbReference type="EnsemblPlants" id="TraesKARUn01G0075620.1">
    <property type="protein sequence ID" value="cds.TraesKARUn01G0075620.1"/>
    <property type="gene ID" value="TraesKARUn01G0075620"/>
</dbReference>
<dbReference type="EnsemblPlants" id="TraesKARUn01G0076140.1">
    <property type="protein sequence ID" value="cds.TraesKARUn01G0076140.1"/>
    <property type="gene ID" value="TraesKARUn01G0076140"/>
</dbReference>
<dbReference type="EnsemblPlants" id="TraesKARUn01G0077990.1">
    <property type="protein sequence ID" value="cds.TraesKARUn01G0077990.1"/>
    <property type="gene ID" value="TraesKARUn01G0077990"/>
</dbReference>
<dbReference type="EnsemblPlants" id="TraesKARUn01G0085120.1">
    <property type="protein sequence ID" value="cds.TraesKARUn01G0085120.1"/>
    <property type="gene ID" value="TraesKARUn01G0085120"/>
</dbReference>
<dbReference type="EnsemblPlants" id="TraesKARUn01G0086030.1">
    <property type="protein sequence ID" value="cds.TraesKARUn01G0086030.1"/>
    <property type="gene ID" value="TraesKARUn01G0086030"/>
</dbReference>
<dbReference type="EnsemblPlants" id="TraesKARUn01G0088360.1">
    <property type="protein sequence ID" value="cds.TraesKARUn01G0088360.1"/>
    <property type="gene ID" value="TraesKARUn01G0088360"/>
</dbReference>
<dbReference type="EnsemblPlants" id="TraesKARUn01G0089050.1">
    <property type="protein sequence ID" value="cds.TraesKARUn01G0089050.1"/>
    <property type="gene ID" value="TraesKARUn01G0089050"/>
</dbReference>
<dbReference type="EnsemblPlants" id="TraesKARUn01G0091110.1">
    <property type="protein sequence ID" value="cds.TraesKARUn01G0091110.1"/>
    <property type="gene ID" value="TraesKARUn01G0091110"/>
</dbReference>
<dbReference type="EnsemblPlants" id="TraesKARUn01G0094040.1">
    <property type="protein sequence ID" value="cds.TraesKARUn01G0094040.1"/>
    <property type="gene ID" value="TraesKARUn01G0094040"/>
</dbReference>
<dbReference type="EnsemblPlants" id="TraesKARUn01G0094070.1">
    <property type="protein sequence ID" value="cds.TraesKARUn01G0094070.1"/>
    <property type="gene ID" value="TraesKARUn01G0094070"/>
</dbReference>
<dbReference type="EnsemblPlants" id="TraesKARUn01G0094240.1">
    <property type="protein sequence ID" value="cds.TraesKARUn01G0094240.1"/>
    <property type="gene ID" value="TraesKARUn01G0094240"/>
</dbReference>
<dbReference type="EnsemblPlants" id="TraesKARUn01G0097170.1">
    <property type="protein sequence ID" value="cds.TraesKARUn01G0097170.1"/>
    <property type="gene ID" value="TraesKARUn01G0097170"/>
</dbReference>
<dbReference type="EnsemblPlants" id="TraesKARUn01G0097780.1">
    <property type="protein sequence ID" value="cds.TraesKARUn01G0097780.1"/>
    <property type="gene ID" value="TraesKARUn01G0097780"/>
</dbReference>
<dbReference type="EnsemblPlants" id="TraesKARUn01G0098750.1">
    <property type="protein sequence ID" value="cds.TraesKARUn01G0098750.1"/>
    <property type="gene ID" value="TraesKARUn01G0098750"/>
</dbReference>
<dbReference type="EnsemblPlants" id="TraesKARUn01G0106950.1">
    <property type="protein sequence ID" value="cds.TraesKARUn01G0106950.1"/>
    <property type="gene ID" value="TraesKARUn01G0106950"/>
</dbReference>
<dbReference type="EnsemblPlants" id="TraesKARUn01G0107000.1">
    <property type="protein sequence ID" value="cds.TraesKARUn01G0107000.1"/>
    <property type="gene ID" value="TraesKARUn01G0107000"/>
</dbReference>
<dbReference type="EnsemblPlants" id="TraesKARUn01G0107400.1">
    <property type="protein sequence ID" value="cds.TraesKARUn01G0107400.1"/>
    <property type="gene ID" value="TraesKARUn01G0107400"/>
</dbReference>
<dbReference type="EnsemblPlants" id="TraesKARUn01G0108310.1">
    <property type="protein sequence ID" value="cds.TraesKARUn01G0108310.1"/>
    <property type="gene ID" value="TraesKARUn01G0108310"/>
</dbReference>
<dbReference type="EnsemblPlants" id="TraesKARUn01G0110070.1">
    <property type="protein sequence ID" value="cds.TraesKARUn01G0110070.1"/>
    <property type="gene ID" value="TraesKARUn01G0110070"/>
</dbReference>
<dbReference type="EnsemblPlants" id="TraesKARUn01G0111490.1">
    <property type="protein sequence ID" value="cds.TraesKARUn01G0111490.1"/>
    <property type="gene ID" value="TraesKARUn01G0111490"/>
</dbReference>
<dbReference type="EnsemblPlants" id="TraesKARUn01G0113480.1">
    <property type="protein sequence ID" value="cds.TraesKARUn01G0113480.1"/>
    <property type="gene ID" value="TraesKARUn01G0113480"/>
</dbReference>
<dbReference type="EnsemblPlants" id="TraesKARUn01G0114160.1">
    <property type="protein sequence ID" value="cds.TraesKARUn01G0114160.1"/>
    <property type="gene ID" value="TraesKARUn01G0114160"/>
</dbReference>
<dbReference type="EnsemblPlants" id="TraesKARUn01G0116970.1">
    <property type="protein sequence ID" value="cds.TraesKARUn01G0116970.1"/>
    <property type="gene ID" value="TraesKARUn01G0116970"/>
</dbReference>
<dbReference type="EnsemblPlants" id="TraesKARUn01G0118010.1">
    <property type="protein sequence ID" value="cds.TraesKARUn01G0118010.1"/>
    <property type="gene ID" value="TraesKARUn01G0118010"/>
</dbReference>
<dbReference type="EnsemblPlants" id="TraesKARUn01G0118840.1">
    <property type="protein sequence ID" value="cds.TraesKARUn01G0118840.1"/>
    <property type="gene ID" value="TraesKARUn01G0118840"/>
</dbReference>
<dbReference type="EnsemblPlants" id="TraesKARUn01G0118920.1">
    <property type="protein sequence ID" value="cds.TraesKARUn01G0118920.1"/>
    <property type="gene ID" value="TraesKARUn01G0118920"/>
</dbReference>
<dbReference type="EnsemblPlants" id="TraesKARUn01G0119470.1">
    <property type="protein sequence ID" value="cds.TraesKARUn01G0119470.1"/>
    <property type="gene ID" value="TraesKARUn01G0119470"/>
</dbReference>
<dbReference type="EnsemblPlants" id="TraesKARUn01G0124690.1">
    <property type="protein sequence ID" value="cds.TraesKARUn01G0124690.1"/>
    <property type="gene ID" value="TraesKARUn01G0124690"/>
</dbReference>
<dbReference type="EnsemblPlants" id="TraesKARUn01G0128260.1">
    <property type="protein sequence ID" value="cds.TraesKARUn01G0128260.1"/>
    <property type="gene ID" value="TraesKARUn01G0128260"/>
</dbReference>
<dbReference type="EnsemblPlants" id="TraesKARUn01G0128860.1">
    <property type="protein sequence ID" value="cds.TraesKARUn01G0128860.1"/>
    <property type="gene ID" value="TraesKARUn01G0128860"/>
</dbReference>
<dbReference type="EnsemblPlants" id="TraesKARUn01G0129310.1">
    <property type="protein sequence ID" value="cds.TraesKARUn01G0129310.1"/>
    <property type="gene ID" value="TraesKARUn01G0129310"/>
</dbReference>
<dbReference type="EnsemblPlants" id="TraesKARUn01G0130200.1">
    <property type="protein sequence ID" value="cds.TraesKARUn01G0130200.1"/>
    <property type="gene ID" value="TraesKARUn01G0130200"/>
</dbReference>
<dbReference type="EnsemblPlants" id="TraesKARUn01G0132090.1">
    <property type="protein sequence ID" value="cds.TraesKARUn01G0132090.1"/>
    <property type="gene ID" value="TraesKARUn01G0132090"/>
</dbReference>
<dbReference type="EnsemblPlants" id="TraesKARUn01G0133910.1">
    <property type="protein sequence ID" value="cds.TraesKARUn01G0133910.1"/>
    <property type="gene ID" value="TraesKARUn01G0133910"/>
</dbReference>
<dbReference type="EnsemblPlants" id="TraesKARUn01G0134040.1">
    <property type="protein sequence ID" value="cds.TraesKARUn01G0134040.1"/>
    <property type="gene ID" value="TraesKARUn01G0134040"/>
</dbReference>
<dbReference type="EnsemblPlants" id="TraesKARUn01G0134220.1">
    <property type="protein sequence ID" value="cds.TraesKARUn01G0134220.1"/>
    <property type="gene ID" value="TraesKARUn01G0134220"/>
</dbReference>
<dbReference type="EnsemblPlants" id="TraesKARUn01G0134640.1">
    <property type="protein sequence ID" value="cds.TraesKARUn01G0134640.1"/>
    <property type="gene ID" value="TraesKARUn01G0134640"/>
</dbReference>
<dbReference type="EnsemblPlants" id="TraesKARUn01G0136350.1">
    <property type="protein sequence ID" value="cds.TraesKARUn01G0136350.1"/>
    <property type="gene ID" value="TraesKARUn01G0136350"/>
</dbReference>
<dbReference type="EnsemblPlants" id="TraesKARUn01G0137630.1">
    <property type="protein sequence ID" value="cds.TraesKARUn01G0137630.1"/>
    <property type="gene ID" value="TraesKARUn01G0137630"/>
</dbReference>
<dbReference type="EnsemblPlants" id="TraesKARUn01G0138600.1">
    <property type="protein sequence ID" value="cds.TraesKARUn01G0138600.1"/>
    <property type="gene ID" value="TraesKARUn01G0138600"/>
</dbReference>
<dbReference type="EnsemblPlants" id="TraesKARUn01G0154000.1">
    <property type="protein sequence ID" value="cds.TraesKARUn01G0154000.1"/>
    <property type="gene ID" value="TraesKARUn01G0154000"/>
</dbReference>
<dbReference type="EnsemblPlants" id="TraesKARUn01G0156750.1">
    <property type="protein sequence ID" value="cds.TraesKARUn01G0156750.1"/>
    <property type="gene ID" value="TraesKARUn01G0156750"/>
</dbReference>
<dbReference type="EnsemblPlants" id="TraesKARUn01G0157130.1">
    <property type="protein sequence ID" value="cds.TraesKARUn01G0157130.1"/>
    <property type="gene ID" value="TraesKARUn01G0157130"/>
</dbReference>
<dbReference type="EnsemblPlants" id="TraesKARUn01G0157220.1">
    <property type="protein sequence ID" value="cds.TraesKARUn01G0157220.1"/>
    <property type="gene ID" value="TraesKARUn01G0157220"/>
</dbReference>
<dbReference type="EnsemblPlants" id="TraesKARUn01G0157930.1">
    <property type="protein sequence ID" value="cds.TraesKARUn01G0157930.1"/>
    <property type="gene ID" value="TraesKARUn01G0157930"/>
</dbReference>
<dbReference type="EnsemblPlants" id="TraesKARUn01G0158310.1">
    <property type="protein sequence ID" value="cds.TraesKARUn01G0158310.1"/>
    <property type="gene ID" value="TraesKARUn01G0158310"/>
</dbReference>
<dbReference type="EnsemblPlants" id="TraesKARUn01G0159760.1">
    <property type="protein sequence ID" value="cds.TraesKARUn01G0159760.1"/>
    <property type="gene ID" value="TraesKARUn01G0159760"/>
</dbReference>
<dbReference type="EnsemblPlants" id="TraesKARUn01G0162210.1">
    <property type="protein sequence ID" value="cds.TraesKARUn01G0162210.1"/>
    <property type="gene ID" value="TraesKARUn01G0162210"/>
</dbReference>
<dbReference type="EnsemblPlants" id="TraesKARUn01G0162730.1">
    <property type="protein sequence ID" value="cds.TraesKARUn01G0162730.1"/>
    <property type="gene ID" value="TraesKARUn01G0162730"/>
</dbReference>
<dbReference type="EnsemblPlants" id="TraesKARUn01G0166410.1">
    <property type="protein sequence ID" value="cds.TraesKARUn01G0166410.1"/>
    <property type="gene ID" value="TraesKARUn01G0166410"/>
</dbReference>
<dbReference type="EnsemblPlants" id="TraesKARUn01G0167230.1">
    <property type="protein sequence ID" value="cds.TraesKARUn01G0167230.1"/>
    <property type="gene ID" value="TraesKARUn01G0167230"/>
</dbReference>
<dbReference type="EnsemblPlants" id="TraesKARUn01G0171760.1">
    <property type="protein sequence ID" value="cds.TraesKARUn01G0171760.1"/>
    <property type="gene ID" value="TraesKARUn01G0171760"/>
</dbReference>
<dbReference type="EnsemblPlants" id="TraesKARUn01G0172550.1">
    <property type="protein sequence ID" value="cds.TraesKARUn01G0172550.1"/>
    <property type="gene ID" value="TraesKARUn01G0172550"/>
</dbReference>
<dbReference type="EnsemblPlants" id="TraesKARUn01G0178440.1">
    <property type="protein sequence ID" value="cds.TraesKARUn01G0178440.1"/>
    <property type="gene ID" value="TraesKARUn01G0178440"/>
</dbReference>
<dbReference type="EnsemblPlants" id="TraesKARUn01G0179040.1">
    <property type="protein sequence ID" value="cds.TraesKARUn01G0179040.1"/>
    <property type="gene ID" value="TraesKARUn01G0179040"/>
</dbReference>
<dbReference type="EnsemblPlants" id="TraesKARUn01G0179790.1">
    <property type="protein sequence ID" value="cds.TraesKARUn01G0179790.1"/>
    <property type="gene ID" value="TraesKARUn01G0179790"/>
</dbReference>
<dbReference type="EnsemblPlants" id="TraesKARUn01G0180890.1">
    <property type="protein sequence ID" value="cds.TraesKARUn01G0180890.1"/>
    <property type="gene ID" value="TraesKARUn01G0180890"/>
</dbReference>
<dbReference type="EnsemblPlants" id="TraesKARUn01G0181960.1">
    <property type="protein sequence ID" value="cds.TraesKARUn01G0181960.1"/>
    <property type="gene ID" value="TraesKARUn01G0181960"/>
</dbReference>
<dbReference type="EnsemblPlants" id="TraesKARUn01G0185310.1">
    <property type="protein sequence ID" value="cds.TraesKARUn01G0185310.1"/>
    <property type="gene ID" value="TraesKARUn01G0185310"/>
</dbReference>
<dbReference type="EnsemblPlants" id="TraesKARUn01G0188720.1">
    <property type="protein sequence ID" value="cds.TraesKARUn01G0188720.1"/>
    <property type="gene ID" value="TraesKARUn01G0188720"/>
</dbReference>
<dbReference type="EnsemblPlants" id="TraesKARUn01G0191750.1">
    <property type="protein sequence ID" value="cds.TraesKARUn01G0191750.1"/>
    <property type="gene ID" value="TraesKARUn01G0191750"/>
</dbReference>
<dbReference type="EnsemblPlants" id="TraesPARA_EIv1.0_2054980.1">
    <property type="protein sequence ID" value="TraesPARA_EIv1.0_2054980.1.CDS1"/>
    <property type="gene ID" value="TraesPARA_EIv1.0_2054980"/>
</dbReference>
<dbReference type="EnsemblPlants" id="TraesPARA_EIv1.0_2645530.1">
    <property type="protein sequence ID" value="TraesPARA_EIv1.0_2645530.1.CDS1"/>
    <property type="gene ID" value="TraesPARA_EIv1.0_2645530"/>
</dbReference>
<dbReference type="EnsemblPlants" id="TraesPARA_EIv1.0_2647520.1">
    <property type="protein sequence ID" value="TraesPARA_EIv1.0_2647520.1.CDS1"/>
    <property type="gene ID" value="TraesPARA_EIv1.0_2647520"/>
</dbReference>
<dbReference type="EnsemblPlants" id="TraesPARA_EIv1.0_2648300.1">
    <property type="protein sequence ID" value="TraesPARA_EIv1.0_2648300.1.CDS1"/>
    <property type="gene ID" value="TraesPARA_EIv1.0_2648300"/>
</dbReference>
<dbReference type="EnsemblPlants" id="TraesPARA_EIv1.0_2653270.1">
    <property type="protein sequence ID" value="TraesPARA_EIv1.0_2653270.1.CDS1"/>
    <property type="gene ID" value="TraesPARA_EIv1.0_2653270"/>
</dbReference>
<dbReference type="EnsemblPlants" id="TraesPARA_EIv1.0_2654740.1">
    <property type="protein sequence ID" value="TraesPARA_EIv1.0_2654740.1.CDS1"/>
    <property type="gene ID" value="TraesPARA_EIv1.0_2654740"/>
</dbReference>
<dbReference type="EnsemblPlants" id="TraesPARA_EIv1.0_2655070.1">
    <property type="protein sequence ID" value="TraesPARA_EIv1.0_2655070.1.CDS1"/>
    <property type="gene ID" value="TraesPARA_EIv1.0_2655070"/>
</dbReference>
<dbReference type="EnsemblPlants" id="TraesPARA_EIv1.0_2663390.1">
    <property type="protein sequence ID" value="TraesPARA_EIv1.0_2663390.1.CDS1"/>
    <property type="gene ID" value="TraesPARA_EIv1.0_2663390"/>
</dbReference>
<dbReference type="EnsemblPlants" id="TraesPARA_EIv1.0_2665370.1">
    <property type="protein sequence ID" value="TraesPARA_EIv1.0_2665370.1.CDS1"/>
    <property type="gene ID" value="TraesPARA_EIv1.0_2665370"/>
</dbReference>
<dbReference type="EnsemblPlants" id="TraesPARA_EIv1.0_2665540.1">
    <property type="protein sequence ID" value="TraesPARA_EIv1.0_2665540.1.CDS1"/>
    <property type="gene ID" value="TraesPARA_EIv1.0_2665540"/>
</dbReference>
<dbReference type="EnsemblPlants" id="TraesPARA_EIv1.0_2666440.1">
    <property type="protein sequence ID" value="TraesPARA_EIv1.0_2666440.1.CDS1"/>
    <property type="gene ID" value="TraesPARA_EIv1.0_2666440"/>
</dbReference>
<dbReference type="EnsemblPlants" id="TraesPARA_EIv1.0_2666800.1">
    <property type="protein sequence ID" value="TraesPARA_EIv1.0_2666800.1.CDS1"/>
    <property type="gene ID" value="TraesPARA_EIv1.0_2666800"/>
</dbReference>
<dbReference type="EnsemblPlants" id="TraesPARA_EIv1.0_2670170.1">
    <property type="protein sequence ID" value="TraesPARA_EIv1.0_2670170.1.CDS1"/>
    <property type="gene ID" value="TraesPARA_EIv1.0_2670170"/>
</dbReference>
<dbReference type="EnsemblPlants" id="TraesPARA_EIv1.0_2680460.1">
    <property type="protein sequence ID" value="TraesPARA_EIv1.0_2680460.1.CDS1"/>
    <property type="gene ID" value="TraesPARA_EIv1.0_2680460"/>
</dbReference>
<dbReference type="EnsemblPlants" id="TraesPARA_EIv1.0_2681440.1">
    <property type="protein sequence ID" value="TraesPARA_EIv1.0_2681440.1.CDS1"/>
    <property type="gene ID" value="TraesPARA_EIv1.0_2681440"/>
</dbReference>
<dbReference type="EnsemblPlants" id="TraesPARA_EIv1.0_2681790.1">
    <property type="protein sequence ID" value="TraesPARA_EIv1.0_2681790.1.CDS1"/>
    <property type="gene ID" value="TraesPARA_EIv1.0_2681790"/>
</dbReference>
<dbReference type="EnsemblPlants" id="TraesPARA_EIv1.0_2682110.1">
    <property type="protein sequence ID" value="TraesPARA_EIv1.0_2682110.1.CDS1"/>
    <property type="gene ID" value="TraesPARA_EIv1.0_2682110"/>
</dbReference>
<dbReference type="GeneID" id="803113"/>
<dbReference type="Gramene" id="TraesJUL2D03G01105930.1">
    <property type="protein sequence ID" value="TraesJUL2D03G01105930.1.CDS1"/>
    <property type="gene ID" value="TraesJUL2D03G01105930"/>
</dbReference>
<dbReference type="Gramene" id="TraesKAR6B01G0219450.1">
    <property type="protein sequence ID" value="cds.TraesKAR6B01G0219450.1"/>
    <property type="gene ID" value="TraesKAR6B01G0219450"/>
</dbReference>
<dbReference type="Gramene" id="TraesKARUn01G0026030.1">
    <property type="protein sequence ID" value="cds.TraesKARUn01G0026030.1"/>
    <property type="gene ID" value="TraesKARUn01G0026030"/>
</dbReference>
<dbReference type="Gramene" id="TraesKARUn01G0026330.1">
    <property type="protein sequence ID" value="cds.TraesKARUn01G0026330.1"/>
    <property type="gene ID" value="TraesKARUn01G0026330"/>
</dbReference>
<dbReference type="Gramene" id="TraesKARUn01G0028490.1">
    <property type="protein sequence ID" value="cds.TraesKARUn01G0028490.1"/>
    <property type="gene ID" value="TraesKARUn01G0028490"/>
</dbReference>
<dbReference type="Gramene" id="TraesKARUn01G0029110.1">
    <property type="protein sequence ID" value="cds.TraesKARUn01G0029110.1"/>
    <property type="gene ID" value="TraesKARUn01G0029110"/>
</dbReference>
<dbReference type="Gramene" id="TraesKARUn01G0031700.1">
    <property type="protein sequence ID" value="cds.TraesKARUn01G0031700.1"/>
    <property type="gene ID" value="TraesKARUn01G0031700"/>
</dbReference>
<dbReference type="Gramene" id="TraesKARUn01G0032650.1">
    <property type="protein sequence ID" value="cds.TraesKARUn01G0032650.1"/>
    <property type="gene ID" value="TraesKARUn01G0032650"/>
</dbReference>
<dbReference type="Gramene" id="TraesKARUn01G0033800.1">
    <property type="protein sequence ID" value="cds.TraesKARUn01G0033800.1"/>
    <property type="gene ID" value="TraesKARUn01G0033800"/>
</dbReference>
<dbReference type="Gramene" id="TraesKARUn01G0034660.1">
    <property type="protein sequence ID" value="cds.TraesKARUn01G0034660.1"/>
    <property type="gene ID" value="TraesKARUn01G0034660"/>
</dbReference>
<dbReference type="Gramene" id="TraesKARUn01G0035880.1">
    <property type="protein sequence ID" value="cds.TraesKARUn01G0035880.1"/>
    <property type="gene ID" value="TraesKARUn01G0035880"/>
</dbReference>
<dbReference type="Gramene" id="TraesKARUn01G0071130.1">
    <property type="protein sequence ID" value="cds.TraesKARUn01G0071130.1"/>
    <property type="gene ID" value="TraesKARUn01G0071130"/>
</dbReference>
<dbReference type="Gramene" id="TraesKARUn01G0074950.1">
    <property type="protein sequence ID" value="cds.TraesKARUn01G0074950.1"/>
    <property type="gene ID" value="TraesKARUn01G0074950"/>
</dbReference>
<dbReference type="Gramene" id="TraesKARUn01G0075260.1">
    <property type="protein sequence ID" value="cds.TraesKARUn01G0075260.1"/>
    <property type="gene ID" value="TraesKARUn01G0075260"/>
</dbReference>
<dbReference type="Gramene" id="TraesKARUn01G0075390.1">
    <property type="protein sequence ID" value="cds.TraesKARUn01G0075390.1"/>
    <property type="gene ID" value="TraesKARUn01G0075390"/>
</dbReference>
<dbReference type="Gramene" id="TraesKARUn01G0075620.1">
    <property type="protein sequence ID" value="cds.TraesKARUn01G0075620.1"/>
    <property type="gene ID" value="TraesKARUn01G0075620"/>
</dbReference>
<dbReference type="Gramene" id="TraesKARUn01G0076140.1">
    <property type="protein sequence ID" value="cds.TraesKARUn01G0076140.1"/>
    <property type="gene ID" value="TraesKARUn01G0076140"/>
</dbReference>
<dbReference type="Gramene" id="TraesKARUn01G0077990.1">
    <property type="protein sequence ID" value="cds.TraesKARUn01G0077990.1"/>
    <property type="gene ID" value="TraesKARUn01G0077990"/>
</dbReference>
<dbReference type="Gramene" id="TraesKARUn01G0085120.1">
    <property type="protein sequence ID" value="cds.TraesKARUn01G0085120.1"/>
    <property type="gene ID" value="TraesKARUn01G0085120"/>
</dbReference>
<dbReference type="Gramene" id="TraesKARUn01G0086030.1">
    <property type="protein sequence ID" value="cds.TraesKARUn01G0086030.1"/>
    <property type="gene ID" value="TraesKARUn01G0086030"/>
</dbReference>
<dbReference type="Gramene" id="TraesKARUn01G0088360.1">
    <property type="protein sequence ID" value="cds.TraesKARUn01G0088360.1"/>
    <property type="gene ID" value="TraesKARUn01G0088360"/>
</dbReference>
<dbReference type="Gramene" id="TraesKARUn01G0089050.1">
    <property type="protein sequence ID" value="cds.TraesKARUn01G0089050.1"/>
    <property type="gene ID" value="TraesKARUn01G0089050"/>
</dbReference>
<dbReference type="Gramene" id="TraesKARUn01G0091110.1">
    <property type="protein sequence ID" value="cds.TraesKARUn01G0091110.1"/>
    <property type="gene ID" value="TraesKARUn01G0091110"/>
</dbReference>
<dbReference type="Gramene" id="TraesKARUn01G0094040.1">
    <property type="protein sequence ID" value="cds.TraesKARUn01G0094040.1"/>
    <property type="gene ID" value="TraesKARUn01G0094040"/>
</dbReference>
<dbReference type="Gramene" id="TraesKARUn01G0094070.1">
    <property type="protein sequence ID" value="cds.TraesKARUn01G0094070.1"/>
    <property type="gene ID" value="TraesKARUn01G0094070"/>
</dbReference>
<dbReference type="Gramene" id="TraesKARUn01G0094240.1">
    <property type="protein sequence ID" value="cds.TraesKARUn01G0094240.1"/>
    <property type="gene ID" value="TraesKARUn01G0094240"/>
</dbReference>
<dbReference type="Gramene" id="TraesKARUn01G0097170.1">
    <property type="protein sequence ID" value="cds.TraesKARUn01G0097170.1"/>
    <property type="gene ID" value="TraesKARUn01G0097170"/>
</dbReference>
<dbReference type="Gramene" id="TraesKARUn01G0097780.1">
    <property type="protein sequence ID" value="cds.TraesKARUn01G0097780.1"/>
    <property type="gene ID" value="TraesKARUn01G0097780"/>
</dbReference>
<dbReference type="Gramene" id="TraesKARUn01G0098750.1">
    <property type="protein sequence ID" value="cds.TraesKARUn01G0098750.1"/>
    <property type="gene ID" value="TraesKARUn01G0098750"/>
</dbReference>
<dbReference type="Gramene" id="TraesKARUn01G0106950.1">
    <property type="protein sequence ID" value="cds.TraesKARUn01G0106950.1"/>
    <property type="gene ID" value="TraesKARUn01G0106950"/>
</dbReference>
<dbReference type="Gramene" id="TraesKARUn01G0107000.1">
    <property type="protein sequence ID" value="cds.TraesKARUn01G0107000.1"/>
    <property type="gene ID" value="TraesKARUn01G0107000"/>
</dbReference>
<dbReference type="Gramene" id="TraesKARUn01G0107400.1">
    <property type="protein sequence ID" value="cds.TraesKARUn01G0107400.1"/>
    <property type="gene ID" value="TraesKARUn01G0107400"/>
</dbReference>
<dbReference type="Gramene" id="TraesKARUn01G0108310.1">
    <property type="protein sequence ID" value="cds.TraesKARUn01G0108310.1"/>
    <property type="gene ID" value="TraesKARUn01G0108310"/>
</dbReference>
<dbReference type="Gramene" id="TraesKARUn01G0110070.1">
    <property type="protein sequence ID" value="cds.TraesKARUn01G0110070.1"/>
    <property type="gene ID" value="TraesKARUn01G0110070"/>
</dbReference>
<dbReference type="Gramene" id="TraesKARUn01G0111490.1">
    <property type="protein sequence ID" value="cds.TraesKARUn01G0111490.1"/>
    <property type="gene ID" value="TraesKARUn01G0111490"/>
</dbReference>
<dbReference type="Gramene" id="TraesKARUn01G0113480.1">
    <property type="protein sequence ID" value="cds.TraesKARUn01G0113480.1"/>
    <property type="gene ID" value="TraesKARUn01G0113480"/>
</dbReference>
<dbReference type="Gramene" id="TraesKARUn01G0114160.1">
    <property type="protein sequence ID" value="cds.TraesKARUn01G0114160.1"/>
    <property type="gene ID" value="TraesKARUn01G0114160"/>
</dbReference>
<dbReference type="Gramene" id="TraesKARUn01G0116970.1">
    <property type="protein sequence ID" value="cds.TraesKARUn01G0116970.1"/>
    <property type="gene ID" value="TraesKARUn01G0116970"/>
</dbReference>
<dbReference type="Gramene" id="TraesKARUn01G0118010.1">
    <property type="protein sequence ID" value="cds.TraesKARUn01G0118010.1"/>
    <property type="gene ID" value="TraesKARUn01G0118010"/>
</dbReference>
<dbReference type="Gramene" id="TraesKARUn01G0118840.1">
    <property type="protein sequence ID" value="cds.TraesKARUn01G0118840.1"/>
    <property type="gene ID" value="TraesKARUn01G0118840"/>
</dbReference>
<dbReference type="Gramene" id="TraesKARUn01G0118920.1">
    <property type="protein sequence ID" value="cds.TraesKARUn01G0118920.1"/>
    <property type="gene ID" value="TraesKARUn01G0118920"/>
</dbReference>
<dbReference type="Gramene" id="TraesKARUn01G0119470.1">
    <property type="protein sequence ID" value="cds.TraesKARUn01G0119470.1"/>
    <property type="gene ID" value="TraesKARUn01G0119470"/>
</dbReference>
<dbReference type="Gramene" id="TraesKARUn01G0124690.1">
    <property type="protein sequence ID" value="cds.TraesKARUn01G0124690.1"/>
    <property type="gene ID" value="TraesKARUn01G0124690"/>
</dbReference>
<dbReference type="Gramene" id="TraesKARUn01G0128260.1">
    <property type="protein sequence ID" value="cds.TraesKARUn01G0128260.1"/>
    <property type="gene ID" value="TraesKARUn01G0128260"/>
</dbReference>
<dbReference type="Gramene" id="TraesKARUn01G0128860.1">
    <property type="protein sequence ID" value="cds.TraesKARUn01G0128860.1"/>
    <property type="gene ID" value="TraesKARUn01G0128860"/>
</dbReference>
<dbReference type="Gramene" id="TraesKARUn01G0129310.1">
    <property type="protein sequence ID" value="cds.TraesKARUn01G0129310.1"/>
    <property type="gene ID" value="TraesKARUn01G0129310"/>
</dbReference>
<dbReference type="Gramene" id="TraesKARUn01G0130200.1">
    <property type="protein sequence ID" value="cds.TraesKARUn01G0130200.1"/>
    <property type="gene ID" value="TraesKARUn01G0130200"/>
</dbReference>
<dbReference type="Gramene" id="TraesKARUn01G0132090.1">
    <property type="protein sequence ID" value="cds.TraesKARUn01G0132090.1"/>
    <property type="gene ID" value="TraesKARUn01G0132090"/>
</dbReference>
<dbReference type="Gramene" id="TraesKARUn01G0133910.1">
    <property type="protein sequence ID" value="cds.TraesKARUn01G0133910.1"/>
    <property type="gene ID" value="TraesKARUn01G0133910"/>
</dbReference>
<dbReference type="Gramene" id="TraesKARUn01G0134040.1">
    <property type="protein sequence ID" value="cds.TraesKARUn01G0134040.1"/>
    <property type="gene ID" value="TraesKARUn01G0134040"/>
</dbReference>
<dbReference type="Gramene" id="TraesKARUn01G0134220.1">
    <property type="protein sequence ID" value="cds.TraesKARUn01G0134220.1"/>
    <property type="gene ID" value="TraesKARUn01G0134220"/>
</dbReference>
<dbReference type="Gramene" id="TraesKARUn01G0134640.1">
    <property type="protein sequence ID" value="cds.TraesKARUn01G0134640.1"/>
    <property type="gene ID" value="TraesKARUn01G0134640"/>
</dbReference>
<dbReference type="Gramene" id="TraesKARUn01G0136350.1">
    <property type="protein sequence ID" value="cds.TraesKARUn01G0136350.1"/>
    <property type="gene ID" value="TraesKARUn01G0136350"/>
</dbReference>
<dbReference type="Gramene" id="TraesKARUn01G0137630.1">
    <property type="protein sequence ID" value="cds.TraesKARUn01G0137630.1"/>
    <property type="gene ID" value="TraesKARUn01G0137630"/>
</dbReference>
<dbReference type="Gramene" id="TraesKARUn01G0138600.1">
    <property type="protein sequence ID" value="cds.TraesKARUn01G0138600.1"/>
    <property type="gene ID" value="TraesKARUn01G0138600"/>
</dbReference>
<dbReference type="Gramene" id="TraesKARUn01G0154000.1">
    <property type="protein sequence ID" value="cds.TraesKARUn01G0154000.1"/>
    <property type="gene ID" value="TraesKARUn01G0154000"/>
</dbReference>
<dbReference type="Gramene" id="TraesKARUn01G0156750.1">
    <property type="protein sequence ID" value="cds.TraesKARUn01G0156750.1"/>
    <property type="gene ID" value="TraesKARUn01G0156750"/>
</dbReference>
<dbReference type="Gramene" id="TraesKARUn01G0157130.1">
    <property type="protein sequence ID" value="cds.TraesKARUn01G0157130.1"/>
    <property type="gene ID" value="TraesKARUn01G0157130"/>
</dbReference>
<dbReference type="Gramene" id="TraesKARUn01G0157220.1">
    <property type="protein sequence ID" value="cds.TraesKARUn01G0157220.1"/>
    <property type="gene ID" value="TraesKARUn01G0157220"/>
</dbReference>
<dbReference type="Gramene" id="TraesKARUn01G0157930.1">
    <property type="protein sequence ID" value="cds.TraesKARUn01G0157930.1"/>
    <property type="gene ID" value="TraesKARUn01G0157930"/>
</dbReference>
<dbReference type="Gramene" id="TraesKARUn01G0158310.1">
    <property type="protein sequence ID" value="cds.TraesKARUn01G0158310.1"/>
    <property type="gene ID" value="TraesKARUn01G0158310"/>
</dbReference>
<dbReference type="Gramene" id="TraesKARUn01G0159760.1">
    <property type="protein sequence ID" value="cds.TraesKARUn01G0159760.1"/>
    <property type="gene ID" value="TraesKARUn01G0159760"/>
</dbReference>
<dbReference type="Gramene" id="TraesKARUn01G0162210.1">
    <property type="protein sequence ID" value="cds.TraesKARUn01G0162210.1"/>
    <property type="gene ID" value="TraesKARUn01G0162210"/>
</dbReference>
<dbReference type="Gramene" id="TraesKARUn01G0162730.1">
    <property type="protein sequence ID" value="cds.TraesKARUn01G0162730.1"/>
    <property type="gene ID" value="TraesKARUn01G0162730"/>
</dbReference>
<dbReference type="Gramene" id="TraesKARUn01G0166410.1">
    <property type="protein sequence ID" value="cds.TraesKARUn01G0166410.1"/>
    <property type="gene ID" value="TraesKARUn01G0166410"/>
</dbReference>
<dbReference type="Gramene" id="TraesKARUn01G0167230.1">
    <property type="protein sequence ID" value="cds.TraesKARUn01G0167230.1"/>
    <property type="gene ID" value="TraesKARUn01G0167230"/>
</dbReference>
<dbReference type="Gramene" id="TraesKARUn01G0171760.1">
    <property type="protein sequence ID" value="cds.TraesKARUn01G0171760.1"/>
    <property type="gene ID" value="TraesKARUn01G0171760"/>
</dbReference>
<dbReference type="Gramene" id="TraesKARUn01G0172550.1">
    <property type="protein sequence ID" value="cds.TraesKARUn01G0172550.1"/>
    <property type="gene ID" value="TraesKARUn01G0172550"/>
</dbReference>
<dbReference type="Gramene" id="TraesKARUn01G0178440.1">
    <property type="protein sequence ID" value="cds.TraesKARUn01G0178440.1"/>
    <property type="gene ID" value="TraesKARUn01G0178440"/>
</dbReference>
<dbReference type="Gramene" id="TraesKARUn01G0179040.1">
    <property type="protein sequence ID" value="cds.TraesKARUn01G0179040.1"/>
    <property type="gene ID" value="TraesKARUn01G0179040"/>
</dbReference>
<dbReference type="Gramene" id="TraesKARUn01G0179790.1">
    <property type="protein sequence ID" value="cds.TraesKARUn01G0179790.1"/>
    <property type="gene ID" value="TraesKARUn01G0179790"/>
</dbReference>
<dbReference type="Gramene" id="TraesKARUn01G0180890.1">
    <property type="protein sequence ID" value="cds.TraesKARUn01G0180890.1"/>
    <property type="gene ID" value="TraesKARUn01G0180890"/>
</dbReference>
<dbReference type="Gramene" id="TraesKARUn01G0181960.1">
    <property type="protein sequence ID" value="cds.TraesKARUn01G0181960.1"/>
    <property type="gene ID" value="TraesKARUn01G0181960"/>
</dbReference>
<dbReference type="Gramene" id="TraesKARUn01G0185310.1">
    <property type="protein sequence ID" value="cds.TraesKARUn01G0185310.1"/>
    <property type="gene ID" value="TraesKARUn01G0185310"/>
</dbReference>
<dbReference type="Gramene" id="TraesKARUn01G0188720.1">
    <property type="protein sequence ID" value="cds.TraesKARUn01G0188720.1"/>
    <property type="gene ID" value="TraesKARUn01G0188720"/>
</dbReference>
<dbReference type="Gramene" id="TraesKARUn01G0191750.1">
    <property type="protein sequence ID" value="cds.TraesKARUn01G0191750.1"/>
    <property type="gene ID" value="TraesKARUn01G0191750"/>
</dbReference>
<dbReference type="Gramene" id="TraesPARA_EIv1.0_2054980.1">
    <property type="protein sequence ID" value="TraesPARA_EIv1.0_2054980.1.CDS1"/>
    <property type="gene ID" value="TraesPARA_EIv1.0_2054980"/>
</dbReference>
<dbReference type="Gramene" id="TraesPARA_EIv1.0_2645530.1">
    <property type="protein sequence ID" value="TraesPARA_EIv1.0_2645530.1.CDS1"/>
    <property type="gene ID" value="TraesPARA_EIv1.0_2645530"/>
</dbReference>
<dbReference type="Gramene" id="TraesPARA_EIv1.0_2647520.1">
    <property type="protein sequence ID" value="TraesPARA_EIv1.0_2647520.1.CDS1"/>
    <property type="gene ID" value="TraesPARA_EIv1.0_2647520"/>
</dbReference>
<dbReference type="Gramene" id="TraesPARA_EIv1.0_2648300.1">
    <property type="protein sequence ID" value="TraesPARA_EIv1.0_2648300.1.CDS1"/>
    <property type="gene ID" value="TraesPARA_EIv1.0_2648300"/>
</dbReference>
<dbReference type="Gramene" id="TraesPARA_EIv1.0_2653270.1">
    <property type="protein sequence ID" value="TraesPARA_EIv1.0_2653270.1.CDS1"/>
    <property type="gene ID" value="TraesPARA_EIv1.0_2653270"/>
</dbReference>
<dbReference type="Gramene" id="TraesPARA_EIv1.0_2654740.1">
    <property type="protein sequence ID" value="TraesPARA_EIv1.0_2654740.1.CDS1"/>
    <property type="gene ID" value="TraesPARA_EIv1.0_2654740"/>
</dbReference>
<dbReference type="Gramene" id="TraesPARA_EIv1.0_2655070.1">
    <property type="protein sequence ID" value="TraesPARA_EIv1.0_2655070.1.CDS1"/>
    <property type="gene ID" value="TraesPARA_EIv1.0_2655070"/>
</dbReference>
<dbReference type="Gramene" id="TraesPARA_EIv1.0_2663390.1">
    <property type="protein sequence ID" value="TraesPARA_EIv1.0_2663390.1.CDS1"/>
    <property type="gene ID" value="TraesPARA_EIv1.0_2663390"/>
</dbReference>
<dbReference type="Gramene" id="TraesPARA_EIv1.0_2665370.1">
    <property type="protein sequence ID" value="TraesPARA_EIv1.0_2665370.1.CDS1"/>
    <property type="gene ID" value="TraesPARA_EIv1.0_2665370"/>
</dbReference>
<dbReference type="Gramene" id="TraesPARA_EIv1.0_2665540.1">
    <property type="protein sequence ID" value="TraesPARA_EIv1.0_2665540.1.CDS1"/>
    <property type="gene ID" value="TraesPARA_EIv1.0_2665540"/>
</dbReference>
<dbReference type="Gramene" id="TraesPARA_EIv1.0_2666440.1">
    <property type="protein sequence ID" value="TraesPARA_EIv1.0_2666440.1.CDS1"/>
    <property type="gene ID" value="TraesPARA_EIv1.0_2666440"/>
</dbReference>
<dbReference type="Gramene" id="TraesPARA_EIv1.0_2666800.1">
    <property type="protein sequence ID" value="TraesPARA_EIv1.0_2666800.1.CDS1"/>
    <property type="gene ID" value="TraesPARA_EIv1.0_2666800"/>
</dbReference>
<dbReference type="Gramene" id="TraesPARA_EIv1.0_2670170.1">
    <property type="protein sequence ID" value="TraesPARA_EIv1.0_2670170.1.CDS1"/>
    <property type="gene ID" value="TraesPARA_EIv1.0_2670170"/>
</dbReference>
<dbReference type="Gramene" id="TraesPARA_EIv1.0_2680460.1">
    <property type="protein sequence ID" value="TraesPARA_EIv1.0_2680460.1.CDS1"/>
    <property type="gene ID" value="TraesPARA_EIv1.0_2680460"/>
</dbReference>
<dbReference type="Gramene" id="TraesPARA_EIv1.0_2681440.1">
    <property type="protein sequence ID" value="TraesPARA_EIv1.0_2681440.1.CDS1"/>
    <property type="gene ID" value="TraesPARA_EIv1.0_2681440"/>
</dbReference>
<dbReference type="Gramene" id="TraesPARA_EIv1.0_2681790.1">
    <property type="protein sequence ID" value="TraesPARA_EIv1.0_2681790.1.CDS1"/>
    <property type="gene ID" value="TraesPARA_EIv1.0_2681790"/>
</dbReference>
<dbReference type="Gramene" id="TraesPARA_EIv1.0_2682110.1">
    <property type="protein sequence ID" value="TraesPARA_EIv1.0_2682110.1.CDS1"/>
    <property type="gene ID" value="TraesPARA_EIv1.0_2682110"/>
</dbReference>
<dbReference type="KEGG" id="taes:803113"/>
<dbReference type="eggNOG" id="ENOG502QPT8">
    <property type="taxonomic scope" value="Eukaryota"/>
</dbReference>
<dbReference type="HOGENOM" id="CLU_033498_0_0_1"/>
<dbReference type="Proteomes" id="UP000019116">
    <property type="component" value="Chloroplast"/>
</dbReference>
<dbReference type="GO" id="GO:0009535">
    <property type="term" value="C:chloroplast thylakoid membrane"/>
    <property type="evidence" value="ECO:0007669"/>
    <property type="project" value="UniProtKB-SubCell"/>
</dbReference>
<dbReference type="GO" id="GO:0009055">
    <property type="term" value="F:electron transfer activity"/>
    <property type="evidence" value="ECO:0007669"/>
    <property type="project" value="UniProtKB-UniRule"/>
</dbReference>
<dbReference type="GO" id="GO:0020037">
    <property type="term" value="F:heme binding"/>
    <property type="evidence" value="ECO:0007669"/>
    <property type="project" value="InterPro"/>
</dbReference>
<dbReference type="GO" id="GO:0005506">
    <property type="term" value="F:iron ion binding"/>
    <property type="evidence" value="ECO:0007669"/>
    <property type="project" value="InterPro"/>
</dbReference>
<dbReference type="GO" id="GO:0015979">
    <property type="term" value="P:photosynthesis"/>
    <property type="evidence" value="ECO:0007669"/>
    <property type="project" value="UniProtKB-UniRule"/>
</dbReference>
<dbReference type="FunFam" id="1.20.5.700:FF:000001">
    <property type="entry name" value="Cytochrome f"/>
    <property type="match status" value="1"/>
</dbReference>
<dbReference type="FunFam" id="2.40.50.100:FF:000007">
    <property type="entry name" value="Cytochrome f"/>
    <property type="match status" value="1"/>
</dbReference>
<dbReference type="FunFam" id="2.60.40.830:FF:000001">
    <property type="entry name" value="Cytochrome f"/>
    <property type="match status" value="1"/>
</dbReference>
<dbReference type="Gene3D" id="2.40.50.100">
    <property type="match status" value="1"/>
</dbReference>
<dbReference type="Gene3D" id="2.60.40.830">
    <property type="entry name" value="Cytochrome f large domain"/>
    <property type="match status" value="1"/>
</dbReference>
<dbReference type="Gene3D" id="1.20.5.700">
    <property type="entry name" value="Single helix bin"/>
    <property type="match status" value="1"/>
</dbReference>
<dbReference type="HAMAP" id="MF_00610">
    <property type="entry name" value="Cytb6_f_cytF"/>
    <property type="match status" value="1"/>
</dbReference>
<dbReference type="InterPro" id="IPR024058">
    <property type="entry name" value="Cyt-f_TM"/>
</dbReference>
<dbReference type="InterPro" id="IPR002325">
    <property type="entry name" value="Cyt_f"/>
</dbReference>
<dbReference type="InterPro" id="IPR024094">
    <property type="entry name" value="Cyt_f_lg_dom"/>
</dbReference>
<dbReference type="InterPro" id="IPR036826">
    <property type="entry name" value="Cyt_f_lg_dom_sf"/>
</dbReference>
<dbReference type="InterPro" id="IPR011054">
    <property type="entry name" value="Rudment_hybrid_motif"/>
</dbReference>
<dbReference type="PANTHER" id="PTHR33288">
    <property type="match status" value="1"/>
</dbReference>
<dbReference type="PANTHER" id="PTHR33288:SF10">
    <property type="entry name" value="CYTOCHROME F"/>
    <property type="match status" value="1"/>
</dbReference>
<dbReference type="Pfam" id="PF01333">
    <property type="entry name" value="Apocytochr_F_C"/>
    <property type="match status" value="1"/>
</dbReference>
<dbReference type="Pfam" id="PF16639">
    <property type="entry name" value="Apocytochr_F_N"/>
    <property type="match status" value="1"/>
</dbReference>
<dbReference type="PRINTS" id="PR00610">
    <property type="entry name" value="CYTOCHROMEF"/>
</dbReference>
<dbReference type="SUPFAM" id="SSF103431">
    <property type="entry name" value="Cytochrome f subunit of the cytochrome b6f complex, transmembrane anchor"/>
    <property type="match status" value="1"/>
</dbReference>
<dbReference type="SUPFAM" id="SSF49441">
    <property type="entry name" value="Cytochrome f, large domain"/>
    <property type="match status" value="1"/>
</dbReference>
<dbReference type="SUPFAM" id="SSF51246">
    <property type="entry name" value="Rudiment single hybrid motif"/>
    <property type="match status" value="1"/>
</dbReference>
<dbReference type="PROSITE" id="PS51010">
    <property type="entry name" value="CYTF"/>
    <property type="match status" value="1"/>
</dbReference>
<keyword id="KW-0150">Chloroplast</keyword>
<keyword id="KW-0249">Electron transport</keyword>
<keyword id="KW-0349">Heme</keyword>
<keyword id="KW-0408">Iron</keyword>
<keyword id="KW-0472">Membrane</keyword>
<keyword id="KW-0479">Metal-binding</keyword>
<keyword id="KW-0602">Photosynthesis</keyword>
<keyword id="KW-0934">Plastid</keyword>
<keyword id="KW-1185">Reference proteome</keyword>
<keyword id="KW-0732">Signal</keyword>
<keyword id="KW-0793">Thylakoid</keyword>
<keyword id="KW-0812">Transmembrane</keyword>
<keyword id="KW-1133">Transmembrane helix</keyword>
<keyword id="KW-0813">Transport</keyword>
<organism>
    <name type="scientific">Triticum aestivum</name>
    <name type="common">Wheat</name>
    <dbReference type="NCBI Taxonomy" id="4565"/>
    <lineage>
        <taxon>Eukaryota</taxon>
        <taxon>Viridiplantae</taxon>
        <taxon>Streptophyta</taxon>
        <taxon>Embryophyta</taxon>
        <taxon>Tracheophyta</taxon>
        <taxon>Spermatophyta</taxon>
        <taxon>Magnoliopsida</taxon>
        <taxon>Liliopsida</taxon>
        <taxon>Poales</taxon>
        <taxon>Poaceae</taxon>
        <taxon>BOP clade</taxon>
        <taxon>Pooideae</taxon>
        <taxon>Triticodae</taxon>
        <taxon>Triticeae</taxon>
        <taxon>Triticinae</taxon>
        <taxon>Triticum</taxon>
    </lineage>
</organism>
<feature type="signal peptide" evidence="1">
    <location>
        <begin position="1"/>
        <end position="35"/>
    </location>
</feature>
<feature type="chain" id="PRO_0000023840" description="Cytochrome f">
    <location>
        <begin position="36"/>
        <end position="320"/>
    </location>
</feature>
<feature type="transmembrane region" description="Helical" evidence="2">
    <location>
        <begin position="286"/>
        <end position="305"/>
    </location>
</feature>
<feature type="binding site" description="axial binding residue" evidence="1">
    <location>
        <position position="36"/>
    </location>
    <ligand>
        <name>heme</name>
        <dbReference type="ChEBI" id="CHEBI:30413"/>
    </ligand>
    <ligandPart>
        <name>Fe</name>
        <dbReference type="ChEBI" id="CHEBI:18248"/>
    </ligandPart>
</feature>
<feature type="binding site" description="covalent" evidence="1">
    <location>
        <position position="56"/>
    </location>
    <ligand>
        <name>heme</name>
        <dbReference type="ChEBI" id="CHEBI:30413"/>
    </ligand>
</feature>
<feature type="binding site" description="covalent" evidence="1">
    <location>
        <position position="59"/>
    </location>
    <ligand>
        <name>heme</name>
        <dbReference type="ChEBI" id="CHEBI:30413"/>
    </ligand>
</feature>
<feature type="binding site" description="axial binding residue" evidence="1">
    <location>
        <position position="60"/>
    </location>
    <ligand>
        <name>heme</name>
        <dbReference type="ChEBI" id="CHEBI:30413"/>
    </ligand>
    <ligandPart>
        <name>Fe</name>
        <dbReference type="ChEBI" id="CHEBI:18248"/>
    </ligandPart>
</feature>
<feature type="sequence conflict" description="In Ref. 2; BAB47046." evidence="3" ref="2">
    <original>FFFA</original>
    <variation>NVLE</variation>
    <location>
        <begin position="291"/>
        <end position="294"/>
    </location>
</feature>
<feature type="sequence conflict" description="In Ref. 2; BAB47046." evidence="3" ref="2">
    <original>LVLKK</original>
    <variation>WFSST</variation>
    <location>
        <begin position="303"/>
        <end position="307"/>
    </location>
</feature>
<accession>P05151</accession>
<gene>
    <name type="primary">petA</name>
</gene>
<comment type="function">
    <text evidence="1">Component of the cytochrome b6-f complex, which mediates electron transfer between photosystem II (PSII) and photosystem I (PSI), cyclic electron flow around PSI, and state transitions.</text>
</comment>
<comment type="cofactor">
    <cofactor evidence="1">
        <name>heme</name>
        <dbReference type="ChEBI" id="CHEBI:30413"/>
    </cofactor>
    <text evidence="1">Binds 1 heme group covalently.</text>
</comment>
<comment type="subunit">
    <text evidence="1">The 4 large subunits of the cytochrome b6-f complex are cytochrome b6, subunit IV (17 kDa polypeptide, petD), cytochrome f and the Rieske protein, while the 4 small subunits are PetG, PetL, PetM and PetN. The complex functions as a dimer (By similarity).</text>
</comment>
<comment type="subcellular location">
    <subcellularLocation>
        <location evidence="1">Plastid</location>
        <location evidence="1">Chloroplast thylakoid membrane</location>
        <topology evidence="1">Single-pass membrane protein</topology>
    </subcellularLocation>
</comment>
<comment type="similarity">
    <text evidence="3">Belongs to the cytochrome f family.</text>
</comment>